<dbReference type="EMBL" id="KF751516">
    <property type="protein sequence ID" value="AHC13261.1"/>
    <property type="molecule type" value="mRNA"/>
</dbReference>
<dbReference type="EMBL" id="KF751517">
    <property type="protein sequence ID" value="AHC13262.1"/>
    <property type="molecule type" value="mRNA"/>
</dbReference>
<dbReference type="SMR" id="V9QER4"/>
<dbReference type="GO" id="GO:0005576">
    <property type="term" value="C:extracellular region"/>
    <property type="evidence" value="ECO:0007669"/>
    <property type="project" value="UniProtKB-SubCell"/>
</dbReference>
<dbReference type="Gene3D" id="1.10.2010.10">
    <property type="entry name" value="Crustacean CHH/MIH/GIH neurohormone"/>
    <property type="match status" value="1"/>
</dbReference>
<dbReference type="InterPro" id="IPR031098">
    <property type="entry name" value="Crust_neurohorm"/>
</dbReference>
<dbReference type="InterPro" id="IPR035957">
    <property type="entry name" value="Crust_neurohorm_sf"/>
</dbReference>
<dbReference type="Pfam" id="PF01147">
    <property type="entry name" value="Crust_neurohorm"/>
    <property type="match status" value="1"/>
</dbReference>
<dbReference type="SUPFAM" id="SSF81778">
    <property type="entry name" value="Crustacean CHH/MIH/GIH neurohormone"/>
    <property type="match status" value="1"/>
</dbReference>
<keyword id="KW-0964">Secreted</keyword>
<keyword id="KW-0732">Signal</keyword>
<proteinExistence type="inferred from homology"/>
<organism>
    <name type="scientific">Steatoda grossa</name>
    <name type="common">False black widow</name>
    <dbReference type="NCBI Taxonomy" id="256750"/>
    <lineage>
        <taxon>Eukaryota</taxon>
        <taxon>Metazoa</taxon>
        <taxon>Ecdysozoa</taxon>
        <taxon>Arthropoda</taxon>
        <taxon>Chelicerata</taxon>
        <taxon>Arachnida</taxon>
        <taxon>Araneae</taxon>
        <taxon>Araneomorphae</taxon>
        <taxon>Entelegynae</taxon>
        <taxon>Araneoidea</taxon>
        <taxon>Theridiidae</taxon>
        <taxon>Steatoda</taxon>
    </lineage>
</organism>
<sequence>MSKLHFLILLSVIVSVFCIEPQDIGCTGISTAEFEEKDATCSKCEEDYSGNGMIDRCRSDCYSGPFFKSCVELLNKGYDEKDENVKPEW</sequence>
<reference key="1">
    <citation type="journal article" date="2014" name="Gene">
        <title>Recruitment and diversification of an ecdysozoan family of neuropeptide hormones for black widow spider venom expression.</title>
        <authorList>
            <person name="McCowan C."/>
            <person name="Garb J.E."/>
        </authorList>
    </citation>
    <scope>NUCLEOTIDE SEQUENCE [MRNA]</scope>
    <source>
        <tissue>Venom gland</tissue>
    </source>
</reference>
<comment type="function">
    <text evidence="1">May increase the toxicity of alpha-latrotoxin and/or other venom components. Is non-toxic to mice and to the cockroach Periplaneta americana.</text>
</comment>
<comment type="subcellular location">
    <subcellularLocation>
        <location evidence="1">Secreted</location>
    </subcellularLocation>
</comment>
<comment type="tissue specificity">
    <text evidence="4">Expressed by the venom gland.</text>
</comment>
<comment type="similarity">
    <text>Belongs to the arthropod CHH/MIH/GIH/VIH hormone family.</text>
</comment>
<accession>V9QER4</accession>
<accession>V9QF72</accession>
<feature type="signal peptide" evidence="2">
    <location>
        <begin position="1"/>
        <end position="18"/>
    </location>
</feature>
<feature type="chain" id="PRO_0000432884" description="Alpha-latrotoxin associated low molecular weight protein SGV242-280">
    <location>
        <begin position="19"/>
        <end position="89"/>
    </location>
</feature>
<feature type="sequence conflict" description="In Ref. 1; AHC13262." evidence="4" ref="1">
    <original>L</original>
    <variation>I</variation>
    <location>
        <position position="9"/>
    </location>
</feature>
<feature type="sequence conflict" description="In Ref. 1; AHC13262." evidence="4" ref="1">
    <original>T</original>
    <variation>A</variation>
    <location>
        <position position="40"/>
    </location>
</feature>
<evidence type="ECO:0000250" key="1">
    <source>
        <dbReference type="UniProtKB" id="P49125"/>
    </source>
</evidence>
<evidence type="ECO:0000255" key="2"/>
<evidence type="ECO:0000303" key="3">
    <source>
    </source>
</evidence>
<evidence type="ECO:0000305" key="4"/>
<name>TXAD_STEGR</name>
<protein>
    <recommendedName>
        <fullName evidence="3">Alpha-latrotoxin associated low molecular weight protein SGV242-280</fullName>
        <shortName evidence="3">Alpha-latrotoxin-associated LMWP SGV242-280</shortName>
    </recommendedName>
    <alternativeName>
        <fullName evidence="3">Latrodectin</fullName>
    </alternativeName>
</protein>